<keyword id="KW-0007">Acetylation</keyword>
<keyword id="KW-1017">Isopeptide bond</keyword>
<keyword id="KW-0507">mRNA processing</keyword>
<keyword id="KW-0508">mRNA splicing</keyword>
<keyword id="KW-0539">Nucleus</keyword>
<keyword id="KW-0597">Phosphoprotein</keyword>
<keyword id="KW-1185">Reference proteome</keyword>
<keyword id="KW-0677">Repeat</keyword>
<keyword id="KW-0678">Repressor</keyword>
<keyword id="KW-0694">RNA-binding</keyword>
<keyword id="KW-0832">Ubl conjugation</keyword>
<protein>
    <recommendedName>
        <fullName>Serine/arginine-rich splicing factor 6</fullName>
    </recommendedName>
    <alternativeName>
        <fullName>Splicing factor, arginine/serine-rich 6</fullName>
    </alternativeName>
</protein>
<gene>
    <name type="primary">SRSF6</name>
    <name type="synonym">SFRS6</name>
</gene>
<accession>Q3B7L6</accession>
<name>SRSF6_BOVIN</name>
<sequence length="345" mass="39647">MPRVYIGRLSYNVREKDIQRFFSGYGRLLGIDLKNGYGFVEFEDSRDADDAVYELNGKELCGERVIVEHARGPRRDRDGYSYGSRSGGGGYSSRRTSGRDKYGPPVRTEFRLIVENLSSRCSWQDLKDFMRQAGEVTYADAHKERTNEGVIEFRSYSDMKRALDKLDGTEINGRNIRLIEDKPRTSHRRSYSGSRSRSRSRRRSRSRSRRSSRSRSRSISKSRSRSRSRSKGRSRSRSKGRKSRSKSKSKPKSDRGSRSRSRSRSKDEYEKSRSRSRSRSRSPKENGKGDIKSKSRSRSQSRSDSPLPAPPSKARSVSPPPKRASRSHSRSRSKSRSRSRSSSRD</sequence>
<comment type="function">
    <text evidence="1">Plays a role in constitutive splicing and modulates the selection of alternative splice sites. Plays a role in the alternative splicing of MAPT/Tau exon 10. Binds to alternative exons of TNC pre-mRNA and promotes the expression of alternatively spliced TNC. Plays a role in wound healing and in the regulation of keratinocyte differentiation and proliferation via its role in alternative splicing (By similarity).</text>
</comment>
<comment type="subunit">
    <text evidence="1">Binds SREK1/SFRS12. Interacts with DYRK1A (By similarity).</text>
</comment>
<comment type="subcellular location">
    <subcellularLocation>
        <location evidence="2">Nucleus</location>
    </subcellularLocation>
    <subcellularLocation>
        <location evidence="2">Nucleus speckle</location>
    </subcellularLocation>
</comment>
<comment type="PTM">
    <text evidence="1">Extensively phosphorylated on serine residues in the RS domain. Phosphorylated by DYRK1A, probably in the RS domain. Phosphorylation by DYRK1A modulates alternative splice site selection and inhibits the expression of MAPT/Tau exon 10 (By similarity).</text>
</comment>
<comment type="similarity">
    <text evidence="6">Belongs to the splicing factor SR family.</text>
</comment>
<reference key="1">
    <citation type="submission" date="2005-10" db="EMBL/GenBank/DDBJ databases">
        <authorList>
            <consortium name="NIH - Mammalian Gene Collection (MGC) project"/>
        </authorList>
    </citation>
    <scope>NUCLEOTIDE SEQUENCE [LARGE SCALE MRNA]</scope>
    <source>
        <strain>Hereford</strain>
        <tissue>Fetal liver</tissue>
    </source>
</reference>
<dbReference type="EMBL" id="BC107553">
    <property type="protein sequence ID" value="AAI07554.1"/>
    <property type="molecule type" value="mRNA"/>
</dbReference>
<dbReference type="RefSeq" id="NP_001030349.1">
    <property type="nucleotide sequence ID" value="NM_001035272.1"/>
</dbReference>
<dbReference type="SMR" id="Q3B7L6"/>
<dbReference type="FunCoup" id="Q3B7L6">
    <property type="interactions" value="2332"/>
</dbReference>
<dbReference type="STRING" id="9913.ENSBTAP00000011240"/>
<dbReference type="PaxDb" id="9913-ENSBTAP00000011240"/>
<dbReference type="PeptideAtlas" id="Q3B7L6"/>
<dbReference type="GeneID" id="507828"/>
<dbReference type="KEGG" id="bta:507828"/>
<dbReference type="CTD" id="6431"/>
<dbReference type="eggNOG" id="KOG0106">
    <property type="taxonomic scope" value="Eukaryota"/>
</dbReference>
<dbReference type="InParanoid" id="Q3B7L6"/>
<dbReference type="OrthoDB" id="1099063at2759"/>
<dbReference type="Proteomes" id="UP000009136">
    <property type="component" value="Unplaced"/>
</dbReference>
<dbReference type="GO" id="GO:0005737">
    <property type="term" value="C:cytoplasm"/>
    <property type="evidence" value="ECO:0000318"/>
    <property type="project" value="GO_Central"/>
</dbReference>
<dbReference type="GO" id="GO:0016607">
    <property type="term" value="C:nuclear speck"/>
    <property type="evidence" value="ECO:0000250"/>
    <property type="project" value="UniProtKB"/>
</dbReference>
<dbReference type="GO" id="GO:0005634">
    <property type="term" value="C:nucleus"/>
    <property type="evidence" value="ECO:0000318"/>
    <property type="project" value="GO_Central"/>
</dbReference>
<dbReference type="GO" id="GO:0003729">
    <property type="term" value="F:mRNA binding"/>
    <property type="evidence" value="ECO:0000318"/>
    <property type="project" value="GO_Central"/>
</dbReference>
<dbReference type="GO" id="GO:0036002">
    <property type="term" value="F:pre-mRNA binding"/>
    <property type="evidence" value="ECO:0000250"/>
    <property type="project" value="UniProtKB"/>
</dbReference>
<dbReference type="GO" id="GO:0003723">
    <property type="term" value="F:RNA binding"/>
    <property type="evidence" value="ECO:0000250"/>
    <property type="project" value="UniProtKB"/>
</dbReference>
<dbReference type="GO" id="GO:0000380">
    <property type="term" value="P:alternative mRNA splicing, via spliceosome"/>
    <property type="evidence" value="ECO:0000250"/>
    <property type="project" value="UniProtKB"/>
</dbReference>
<dbReference type="GO" id="GO:0006376">
    <property type="term" value="P:mRNA splice site recognition"/>
    <property type="evidence" value="ECO:0000250"/>
    <property type="project" value="UniProtKB"/>
</dbReference>
<dbReference type="GO" id="GO:0045617">
    <property type="term" value="P:negative regulation of keratinocyte differentiation"/>
    <property type="evidence" value="ECO:0000250"/>
    <property type="project" value="UniProtKB"/>
</dbReference>
<dbReference type="GO" id="GO:0048025">
    <property type="term" value="P:negative regulation of mRNA splicing, via spliceosome"/>
    <property type="evidence" value="ECO:0000250"/>
    <property type="project" value="UniProtKB"/>
</dbReference>
<dbReference type="GO" id="GO:0000381">
    <property type="term" value="P:regulation of alternative mRNA splicing, via spliceosome"/>
    <property type="evidence" value="ECO:0000250"/>
    <property type="project" value="UniProtKB"/>
</dbReference>
<dbReference type="GO" id="GO:0010837">
    <property type="term" value="P:regulation of keratinocyte proliferation"/>
    <property type="evidence" value="ECO:0000250"/>
    <property type="project" value="UniProtKB"/>
</dbReference>
<dbReference type="GO" id="GO:0061041">
    <property type="term" value="P:regulation of wound healing"/>
    <property type="evidence" value="ECO:0000250"/>
    <property type="project" value="UniProtKB"/>
</dbReference>
<dbReference type="CDD" id="cd12766">
    <property type="entry name" value="RRM2_SRSF6"/>
    <property type="match status" value="1"/>
</dbReference>
<dbReference type="FunFam" id="3.30.70.330:FF:000028">
    <property type="entry name" value="Putative serine/arginine-rich splicing factor 4"/>
    <property type="match status" value="1"/>
</dbReference>
<dbReference type="FunFam" id="3.30.70.330:FF:000190">
    <property type="entry name" value="serine/arginine-rich splicing factor 4 isoform X1"/>
    <property type="match status" value="1"/>
</dbReference>
<dbReference type="Gene3D" id="3.30.70.330">
    <property type="match status" value="2"/>
</dbReference>
<dbReference type="InterPro" id="IPR012677">
    <property type="entry name" value="Nucleotide-bd_a/b_plait_sf"/>
</dbReference>
<dbReference type="InterPro" id="IPR035979">
    <property type="entry name" value="RBD_domain_sf"/>
</dbReference>
<dbReference type="InterPro" id="IPR000504">
    <property type="entry name" value="RRM_dom"/>
</dbReference>
<dbReference type="InterPro" id="IPR050374">
    <property type="entry name" value="RRT5_SRSF_SR"/>
</dbReference>
<dbReference type="PANTHER" id="PTHR23003">
    <property type="entry name" value="RNA RECOGNITION MOTIF RRM DOMAIN CONTAINING PROTEIN"/>
    <property type="match status" value="1"/>
</dbReference>
<dbReference type="PANTHER" id="PTHR23003:SF52">
    <property type="entry name" value="SERINE_ARGININE-RICH SPLICING FACTOR 6"/>
    <property type="match status" value="1"/>
</dbReference>
<dbReference type="Pfam" id="PF00076">
    <property type="entry name" value="RRM_1"/>
    <property type="match status" value="2"/>
</dbReference>
<dbReference type="SMART" id="SM00360">
    <property type="entry name" value="RRM"/>
    <property type="match status" value="2"/>
</dbReference>
<dbReference type="SUPFAM" id="SSF54928">
    <property type="entry name" value="RNA-binding domain, RBD"/>
    <property type="match status" value="2"/>
</dbReference>
<dbReference type="PROSITE" id="PS50102">
    <property type="entry name" value="RRM"/>
    <property type="match status" value="2"/>
</dbReference>
<feature type="chain" id="PRO_0000287721" description="Serine/arginine-rich splicing factor 6">
    <location>
        <begin position="1"/>
        <end position="345"/>
    </location>
</feature>
<feature type="domain" description="RRM 1" evidence="4">
    <location>
        <begin position="1"/>
        <end position="72"/>
    </location>
</feature>
<feature type="domain" description="RRM 2" evidence="4">
    <location>
        <begin position="110"/>
        <end position="183"/>
    </location>
</feature>
<feature type="region of interest" description="Disordered" evidence="5">
    <location>
        <begin position="75"/>
        <end position="102"/>
    </location>
</feature>
<feature type="region of interest" description="Disordered" evidence="5">
    <location>
        <begin position="176"/>
        <end position="345"/>
    </location>
</feature>
<feature type="compositionally biased region" description="Basic residues" evidence="5">
    <location>
        <begin position="185"/>
        <end position="250"/>
    </location>
</feature>
<feature type="compositionally biased region" description="Basic and acidic residues" evidence="5">
    <location>
        <begin position="264"/>
        <end position="273"/>
    </location>
</feature>
<feature type="compositionally biased region" description="Basic and acidic residues" evidence="5">
    <location>
        <begin position="282"/>
        <end position="293"/>
    </location>
</feature>
<feature type="compositionally biased region" description="Basic residues" evidence="5">
    <location>
        <begin position="323"/>
        <end position="345"/>
    </location>
</feature>
<feature type="modified residue" description="Phosphoserine" evidence="2">
    <location>
        <position position="45"/>
    </location>
</feature>
<feature type="modified residue" description="Phosphoserine" evidence="2">
    <location>
        <position position="81"/>
    </location>
</feature>
<feature type="modified residue" description="Phosphoserine" evidence="2">
    <location>
        <position position="84"/>
    </location>
</feature>
<feature type="modified residue" description="N6-acetyllysine" evidence="3">
    <location>
        <position position="165"/>
    </location>
</feature>
<feature type="modified residue" description="Phosphoserine" evidence="2">
    <location>
        <position position="299"/>
    </location>
</feature>
<feature type="modified residue" description="Phosphoserine" evidence="2">
    <location>
        <position position="301"/>
    </location>
</feature>
<feature type="modified residue" description="Phosphoserine; by DYRK1A" evidence="2">
    <location>
        <position position="305"/>
    </location>
</feature>
<feature type="modified residue" description="Phosphoserine" evidence="2">
    <location>
        <position position="316"/>
    </location>
</feature>
<feature type="modified residue" description="Phosphoserine" evidence="2">
    <location>
        <position position="318"/>
    </location>
</feature>
<feature type="cross-link" description="Glycyl lysine isopeptide (Lys-Gly) (interchain with G-Cter in SUMO2)" evidence="2">
    <location>
        <position position="182"/>
    </location>
</feature>
<proteinExistence type="evidence at transcript level"/>
<evidence type="ECO:0000250" key="1"/>
<evidence type="ECO:0000250" key="2">
    <source>
        <dbReference type="UniProtKB" id="Q13247"/>
    </source>
</evidence>
<evidence type="ECO:0000250" key="3">
    <source>
        <dbReference type="UniProtKB" id="Q3TWW8"/>
    </source>
</evidence>
<evidence type="ECO:0000255" key="4">
    <source>
        <dbReference type="PROSITE-ProRule" id="PRU00176"/>
    </source>
</evidence>
<evidence type="ECO:0000256" key="5">
    <source>
        <dbReference type="SAM" id="MobiDB-lite"/>
    </source>
</evidence>
<evidence type="ECO:0000305" key="6"/>
<organism>
    <name type="scientific">Bos taurus</name>
    <name type="common">Bovine</name>
    <dbReference type="NCBI Taxonomy" id="9913"/>
    <lineage>
        <taxon>Eukaryota</taxon>
        <taxon>Metazoa</taxon>
        <taxon>Chordata</taxon>
        <taxon>Craniata</taxon>
        <taxon>Vertebrata</taxon>
        <taxon>Euteleostomi</taxon>
        <taxon>Mammalia</taxon>
        <taxon>Eutheria</taxon>
        <taxon>Laurasiatheria</taxon>
        <taxon>Artiodactyla</taxon>
        <taxon>Ruminantia</taxon>
        <taxon>Pecora</taxon>
        <taxon>Bovidae</taxon>
        <taxon>Bovinae</taxon>
        <taxon>Bos</taxon>
    </lineage>
</organism>